<comment type="function">
    <text evidence="1">Potassium channel inhibitor.</text>
</comment>
<comment type="subcellular location">
    <subcellularLocation>
        <location evidence="1">Secreted</location>
    </subcellularLocation>
</comment>
<comment type="tissue specificity">
    <text>Expressed by the venom gland.</text>
</comment>
<comment type="domain">
    <text evidence="3">Has the structural arrangement of an alpha-helix connected to antiparallel beta-sheets by disulfide bonds (CS-alpha/beta).</text>
</comment>
<comment type="similarity">
    <text evidence="3">Belongs to the short scorpion toxin superfamily. Potassium channel inhibitor family. Alpha-KTx 03 subfamily.</text>
</comment>
<sequence>MKVFSAVLIILFVCSMIIGISEGKEIPVKCKHSGQCLQPCKDAGMRFGKCMNGKCNCTPK</sequence>
<keyword id="KW-1015">Disulfide bond</keyword>
<keyword id="KW-0872">Ion channel impairing toxin</keyword>
<keyword id="KW-0632">Potassium channel impairing toxin</keyword>
<keyword id="KW-0964">Secreted</keyword>
<keyword id="KW-0732">Signal</keyword>
<keyword id="KW-0800">Toxin</keyword>
<proteinExistence type="evidence at transcript level"/>
<name>KAX3G_MESGB</name>
<evidence type="ECO:0000250" key="1"/>
<evidence type="ECO:0000255" key="2"/>
<evidence type="ECO:0000305" key="3"/>
<organism>
    <name type="scientific">Mesobuthus gibbosus</name>
    <name type="common">Mediterranean checkered scorpion</name>
    <name type="synonym">Buthus gibbosus</name>
    <dbReference type="NCBI Taxonomy" id="123226"/>
    <lineage>
        <taxon>Eukaryota</taxon>
        <taxon>Metazoa</taxon>
        <taxon>Ecdysozoa</taxon>
        <taxon>Arthropoda</taxon>
        <taxon>Chelicerata</taxon>
        <taxon>Arachnida</taxon>
        <taxon>Scorpiones</taxon>
        <taxon>Buthida</taxon>
        <taxon>Buthoidea</taxon>
        <taxon>Buthidae</taxon>
        <taxon>Mesobuthus</taxon>
    </lineage>
</organism>
<protein>
    <recommendedName>
        <fullName>Potassium channel toxin alpha-KTx 3.16</fullName>
    </recommendedName>
    <alternativeName>
        <fullName>MegKTx4</fullName>
    </alternativeName>
    <alternativeName>
        <fullName>Tx4</fullName>
    </alternativeName>
</protein>
<feature type="signal peptide" evidence="2">
    <location>
        <begin position="1"/>
        <end position="23"/>
    </location>
</feature>
<feature type="chain" id="PRO_0000428965" description="Potassium channel toxin alpha-KTx 3.16">
    <location>
        <begin position="24"/>
        <end position="60"/>
    </location>
</feature>
<feature type="disulfide bond" evidence="1">
    <location>
        <begin position="30"/>
        <end position="50"/>
    </location>
</feature>
<feature type="disulfide bond" evidence="1">
    <location>
        <begin position="36"/>
        <end position="55"/>
    </location>
</feature>
<feature type="disulfide bond" evidence="1">
    <location>
        <begin position="40"/>
        <end position="57"/>
    </location>
</feature>
<dbReference type="EMBL" id="JX025015">
    <property type="protein sequence ID" value="AFX61611.1"/>
    <property type="molecule type" value="mRNA"/>
</dbReference>
<dbReference type="SMR" id="K7XFK5"/>
<dbReference type="GO" id="GO:0005576">
    <property type="term" value="C:extracellular region"/>
    <property type="evidence" value="ECO:0007669"/>
    <property type="project" value="UniProtKB-SubCell"/>
</dbReference>
<dbReference type="GO" id="GO:0008200">
    <property type="term" value="F:ion channel inhibitor activity"/>
    <property type="evidence" value="ECO:0007669"/>
    <property type="project" value="InterPro"/>
</dbReference>
<dbReference type="GO" id="GO:0015459">
    <property type="term" value="F:potassium channel regulator activity"/>
    <property type="evidence" value="ECO:0007669"/>
    <property type="project" value="UniProtKB-KW"/>
</dbReference>
<dbReference type="GO" id="GO:0090729">
    <property type="term" value="F:toxin activity"/>
    <property type="evidence" value="ECO:0007669"/>
    <property type="project" value="UniProtKB-KW"/>
</dbReference>
<dbReference type="FunFam" id="3.30.30.10:FF:000009">
    <property type="entry name" value="Potassium channel toxin alpha-KTx 4.3"/>
    <property type="match status" value="1"/>
</dbReference>
<dbReference type="Gene3D" id="3.30.30.10">
    <property type="entry name" value="Knottin, scorpion toxin-like"/>
    <property type="match status" value="1"/>
</dbReference>
<dbReference type="InterPro" id="IPR036574">
    <property type="entry name" value="Scorpion_toxin-like_sf"/>
</dbReference>
<dbReference type="InterPro" id="IPR001947">
    <property type="entry name" value="Scorpion_toxinS_K_inh"/>
</dbReference>
<dbReference type="Pfam" id="PF00451">
    <property type="entry name" value="Toxin_2"/>
    <property type="match status" value="1"/>
</dbReference>
<dbReference type="PRINTS" id="PR00286">
    <property type="entry name" value="CHARYBDTOXIN"/>
</dbReference>
<dbReference type="SUPFAM" id="SSF57095">
    <property type="entry name" value="Scorpion toxin-like"/>
    <property type="match status" value="1"/>
</dbReference>
<dbReference type="PROSITE" id="PS01138">
    <property type="entry name" value="SCORP_SHORT_TOXIN"/>
    <property type="match status" value="1"/>
</dbReference>
<accession>K7XFK5</accession>
<reference key="1">
    <citation type="journal article" date="2013" name="Toxicon">
        <title>Novel potassium channel blocker venom peptides from Mesobuthus gibbosus (Scorpiones: Buthidae).</title>
        <authorList>
            <person name="Diego-Garcia E."/>
            <person name="Peigneur S."/>
            <person name="Debaveye S."/>
            <person name="Gheldof E."/>
            <person name="Tytgat J."/>
            <person name="Caliskan F."/>
        </authorList>
    </citation>
    <scope>NUCLEOTIDE SEQUENCE [MRNA]</scope>
    <source>
        <tissue>Venom gland</tissue>
    </source>
</reference>